<comment type="catalytic activity">
    <reaction evidence="1">
        <text>tRNA(Cys) + L-cysteine + ATP = L-cysteinyl-tRNA(Cys) + AMP + diphosphate</text>
        <dbReference type="Rhea" id="RHEA:17773"/>
        <dbReference type="Rhea" id="RHEA-COMP:9661"/>
        <dbReference type="Rhea" id="RHEA-COMP:9679"/>
        <dbReference type="ChEBI" id="CHEBI:30616"/>
        <dbReference type="ChEBI" id="CHEBI:33019"/>
        <dbReference type="ChEBI" id="CHEBI:35235"/>
        <dbReference type="ChEBI" id="CHEBI:78442"/>
        <dbReference type="ChEBI" id="CHEBI:78517"/>
        <dbReference type="ChEBI" id="CHEBI:456215"/>
        <dbReference type="EC" id="6.1.1.16"/>
    </reaction>
</comment>
<comment type="cofactor">
    <cofactor evidence="1">
        <name>Zn(2+)</name>
        <dbReference type="ChEBI" id="CHEBI:29105"/>
    </cofactor>
    <text evidence="1">Binds 1 zinc ion per subunit.</text>
</comment>
<comment type="subunit">
    <text evidence="1">Monomer.</text>
</comment>
<comment type="subcellular location">
    <subcellularLocation>
        <location evidence="1">Cytoplasm</location>
    </subcellularLocation>
</comment>
<comment type="similarity">
    <text evidence="1">Belongs to the class-I aminoacyl-tRNA synthetase family.</text>
</comment>
<feature type="chain" id="PRO_0000332858" description="Cysteine--tRNA ligase">
    <location>
        <begin position="1"/>
        <end position="463"/>
    </location>
</feature>
<feature type="short sequence motif" description="'HIGH' region">
    <location>
        <begin position="29"/>
        <end position="39"/>
    </location>
</feature>
<feature type="short sequence motif" description="'KMSKS' region">
    <location>
        <begin position="261"/>
        <end position="265"/>
    </location>
</feature>
<feature type="binding site" evidence="1">
    <location>
        <position position="27"/>
    </location>
    <ligand>
        <name>Zn(2+)</name>
        <dbReference type="ChEBI" id="CHEBI:29105"/>
    </ligand>
</feature>
<feature type="binding site" evidence="1">
    <location>
        <position position="205"/>
    </location>
    <ligand>
        <name>Zn(2+)</name>
        <dbReference type="ChEBI" id="CHEBI:29105"/>
    </ligand>
</feature>
<feature type="binding site" evidence="1">
    <location>
        <position position="230"/>
    </location>
    <ligand>
        <name>Zn(2+)</name>
        <dbReference type="ChEBI" id="CHEBI:29105"/>
    </ligand>
</feature>
<feature type="binding site" evidence="1">
    <location>
        <position position="234"/>
    </location>
    <ligand>
        <name>Zn(2+)</name>
        <dbReference type="ChEBI" id="CHEBI:29105"/>
    </ligand>
</feature>
<feature type="binding site" evidence="1">
    <location>
        <position position="264"/>
    </location>
    <ligand>
        <name>ATP</name>
        <dbReference type="ChEBI" id="CHEBI:30616"/>
    </ligand>
</feature>
<reference key="1">
    <citation type="submission" date="2006-12" db="EMBL/GenBank/DDBJ databases">
        <title>Complete sequence of Mycobacterium vanbaalenii PYR-1.</title>
        <authorList>
            <consortium name="US DOE Joint Genome Institute"/>
            <person name="Copeland A."/>
            <person name="Lucas S."/>
            <person name="Lapidus A."/>
            <person name="Barry K."/>
            <person name="Detter J.C."/>
            <person name="Glavina del Rio T."/>
            <person name="Hammon N."/>
            <person name="Israni S."/>
            <person name="Dalin E."/>
            <person name="Tice H."/>
            <person name="Pitluck S."/>
            <person name="Singan V."/>
            <person name="Schmutz J."/>
            <person name="Larimer F."/>
            <person name="Land M."/>
            <person name="Hauser L."/>
            <person name="Kyrpides N."/>
            <person name="Anderson I.J."/>
            <person name="Miller C."/>
            <person name="Richardson P."/>
        </authorList>
    </citation>
    <scope>NUCLEOTIDE SEQUENCE [LARGE SCALE GENOMIC DNA]</scope>
    <source>
        <strain>DSM 7251 / JCM 13017 / BCRC 16820 / KCTC 9966 / NRRL B-24157 / PYR-1</strain>
    </source>
</reference>
<name>SYC_MYCVP</name>
<protein>
    <recommendedName>
        <fullName evidence="1">Cysteine--tRNA ligase</fullName>
        <ecNumber evidence="1">6.1.1.16</ecNumber>
    </recommendedName>
    <alternativeName>
        <fullName evidence="1">Cysteinyl-tRNA synthetase</fullName>
        <shortName evidence="1">CysRS</shortName>
    </alternativeName>
</protein>
<gene>
    <name evidence="1" type="primary">cysS</name>
    <name type="ordered locus">Mvan_5338</name>
</gene>
<accession>A1TG09</accession>
<keyword id="KW-0030">Aminoacyl-tRNA synthetase</keyword>
<keyword id="KW-0067">ATP-binding</keyword>
<keyword id="KW-0963">Cytoplasm</keyword>
<keyword id="KW-0436">Ligase</keyword>
<keyword id="KW-0479">Metal-binding</keyword>
<keyword id="KW-0547">Nucleotide-binding</keyword>
<keyword id="KW-0648">Protein biosynthesis</keyword>
<keyword id="KW-0862">Zinc</keyword>
<proteinExistence type="inferred from homology"/>
<sequence length="463" mass="50739">MRLYDTLSGGVRDFAPLRPGHVSIYLCGATVQGLPHIGHVRSGVAFDVLRRWLTAKGFDVAFIRNVTDIDDKILHKAADAGRPWWEWAATYERAFTAAYDALGVLPPSAEPRATGHITQMVELIERLIERGHAYTGDGDVYFSVATLPDYGKLSGHRIDDVHQGEGVATGKRDQRDFTLWKGAKPGEPSWPTPWGRGRPGWHTECVAMCESYLGAAFDIHAGGMDLVFPHHENEIAQAEAAGDGFARFWLHNGWVTMGGEKMSKSLGNVLAIPAVLQRVRAAELRYYLGSAHYRSMLEFSETALQDAAKAYAGIEDFLHRVRTRVGAVVPGEWTPKFGAALDDDLAVPAALAEVHAARAEGNRALDAGDHDTALTHAMSIRAMMGILGADPLDERWESRDETSAALAAVDVLVQAEVQRREDARARRDWAEADAIRDRLKEAGIEVTDTADGPQWSLLDGTDK</sequence>
<evidence type="ECO:0000255" key="1">
    <source>
        <dbReference type="HAMAP-Rule" id="MF_00041"/>
    </source>
</evidence>
<dbReference type="EC" id="6.1.1.16" evidence="1"/>
<dbReference type="EMBL" id="CP000511">
    <property type="protein sequence ID" value="ABM16109.1"/>
    <property type="molecule type" value="Genomic_DNA"/>
</dbReference>
<dbReference type="RefSeq" id="WP_011782479.1">
    <property type="nucleotide sequence ID" value="NZ_JACKSD010000281.1"/>
</dbReference>
<dbReference type="SMR" id="A1TG09"/>
<dbReference type="STRING" id="350058.Mvan_5338"/>
<dbReference type="KEGG" id="mva:Mvan_5338"/>
<dbReference type="eggNOG" id="COG0215">
    <property type="taxonomic scope" value="Bacteria"/>
</dbReference>
<dbReference type="HOGENOM" id="CLU_013528_0_1_11"/>
<dbReference type="Proteomes" id="UP000009159">
    <property type="component" value="Chromosome"/>
</dbReference>
<dbReference type="GO" id="GO:0005829">
    <property type="term" value="C:cytosol"/>
    <property type="evidence" value="ECO:0007669"/>
    <property type="project" value="TreeGrafter"/>
</dbReference>
<dbReference type="GO" id="GO:0005524">
    <property type="term" value="F:ATP binding"/>
    <property type="evidence" value="ECO:0007669"/>
    <property type="project" value="UniProtKB-UniRule"/>
</dbReference>
<dbReference type="GO" id="GO:0004817">
    <property type="term" value="F:cysteine-tRNA ligase activity"/>
    <property type="evidence" value="ECO:0007669"/>
    <property type="project" value="UniProtKB-UniRule"/>
</dbReference>
<dbReference type="GO" id="GO:0008270">
    <property type="term" value="F:zinc ion binding"/>
    <property type="evidence" value="ECO:0007669"/>
    <property type="project" value="UniProtKB-UniRule"/>
</dbReference>
<dbReference type="GO" id="GO:0006423">
    <property type="term" value="P:cysteinyl-tRNA aminoacylation"/>
    <property type="evidence" value="ECO:0007669"/>
    <property type="project" value="UniProtKB-UniRule"/>
</dbReference>
<dbReference type="CDD" id="cd00672">
    <property type="entry name" value="CysRS_core"/>
    <property type="match status" value="1"/>
</dbReference>
<dbReference type="FunFam" id="3.40.50.620:FF:000068">
    <property type="entry name" value="Cysteine--tRNA ligase"/>
    <property type="match status" value="1"/>
</dbReference>
<dbReference type="Gene3D" id="1.20.120.1910">
    <property type="entry name" value="Cysteine-tRNA ligase, C-terminal anti-codon recognition domain"/>
    <property type="match status" value="1"/>
</dbReference>
<dbReference type="Gene3D" id="3.40.50.620">
    <property type="entry name" value="HUPs"/>
    <property type="match status" value="1"/>
</dbReference>
<dbReference type="HAMAP" id="MF_00041">
    <property type="entry name" value="Cys_tRNA_synth"/>
    <property type="match status" value="1"/>
</dbReference>
<dbReference type="InterPro" id="IPR015803">
    <property type="entry name" value="Cys-tRNA-ligase"/>
</dbReference>
<dbReference type="InterPro" id="IPR015273">
    <property type="entry name" value="Cys-tRNA-synt_Ia_DALR"/>
</dbReference>
<dbReference type="InterPro" id="IPR024909">
    <property type="entry name" value="Cys-tRNA/MSH_ligase"/>
</dbReference>
<dbReference type="InterPro" id="IPR056411">
    <property type="entry name" value="CysS_C"/>
</dbReference>
<dbReference type="InterPro" id="IPR014729">
    <property type="entry name" value="Rossmann-like_a/b/a_fold"/>
</dbReference>
<dbReference type="InterPro" id="IPR032678">
    <property type="entry name" value="tRNA-synt_1_cat_dom"/>
</dbReference>
<dbReference type="InterPro" id="IPR009080">
    <property type="entry name" value="tRNAsynth_Ia_anticodon-bd"/>
</dbReference>
<dbReference type="NCBIfam" id="TIGR00435">
    <property type="entry name" value="cysS"/>
    <property type="match status" value="1"/>
</dbReference>
<dbReference type="PANTHER" id="PTHR10890:SF30">
    <property type="entry name" value="CYSTEINE--TRNA LIGASE"/>
    <property type="match status" value="1"/>
</dbReference>
<dbReference type="PANTHER" id="PTHR10890">
    <property type="entry name" value="CYSTEINYL-TRNA SYNTHETASE"/>
    <property type="match status" value="1"/>
</dbReference>
<dbReference type="Pfam" id="PF23493">
    <property type="entry name" value="CysS_C"/>
    <property type="match status" value="1"/>
</dbReference>
<dbReference type="Pfam" id="PF09190">
    <property type="entry name" value="DALR_2"/>
    <property type="match status" value="1"/>
</dbReference>
<dbReference type="Pfam" id="PF01406">
    <property type="entry name" value="tRNA-synt_1e"/>
    <property type="match status" value="1"/>
</dbReference>
<dbReference type="PRINTS" id="PR00983">
    <property type="entry name" value="TRNASYNTHCYS"/>
</dbReference>
<dbReference type="SMART" id="SM00840">
    <property type="entry name" value="DALR_2"/>
    <property type="match status" value="1"/>
</dbReference>
<dbReference type="SUPFAM" id="SSF47323">
    <property type="entry name" value="Anticodon-binding domain of a subclass of class I aminoacyl-tRNA synthetases"/>
    <property type="match status" value="1"/>
</dbReference>
<dbReference type="SUPFAM" id="SSF52374">
    <property type="entry name" value="Nucleotidylyl transferase"/>
    <property type="match status" value="1"/>
</dbReference>
<organism>
    <name type="scientific">Mycolicibacterium vanbaalenii (strain DSM 7251 / JCM 13017 / BCRC 16820 / KCTC 9966 / NRRL B-24157 / PYR-1)</name>
    <name type="common">Mycobacterium vanbaalenii</name>
    <dbReference type="NCBI Taxonomy" id="350058"/>
    <lineage>
        <taxon>Bacteria</taxon>
        <taxon>Bacillati</taxon>
        <taxon>Actinomycetota</taxon>
        <taxon>Actinomycetes</taxon>
        <taxon>Mycobacteriales</taxon>
        <taxon>Mycobacteriaceae</taxon>
        <taxon>Mycolicibacterium</taxon>
    </lineage>
</organism>